<proteinExistence type="inferred from homology"/>
<reference key="1">
    <citation type="journal article" date="2007" name="PLoS ONE">
        <title>Molecular correlates of host specialization in Staphylococcus aureus.</title>
        <authorList>
            <person name="Herron-Olson L."/>
            <person name="Fitzgerald J.R."/>
            <person name="Musser J.M."/>
            <person name="Kapur V."/>
        </authorList>
    </citation>
    <scope>NUCLEOTIDE SEQUENCE [LARGE SCALE GENOMIC DNA]</scope>
    <source>
        <strain>bovine RF122 / ET3-1</strain>
    </source>
</reference>
<accession>Q2YT87</accession>
<sequence>MMDNKDYKKFYLIREDVLPESVVKTLKIKDALKSDPTLSIYDAVKQFDLSRSAFYKYRETIFPVDDKMLDHREFTLILYVTDIVGMLARVLDVISKLELSVLTIHQSIPMEEKATITLSLNAKSKETSVEDVIGALRNLDYVSKVELISMSM</sequence>
<evidence type="ECO:0000255" key="1">
    <source>
        <dbReference type="HAMAP-Rule" id="MF_00707"/>
    </source>
</evidence>
<feature type="chain" id="PRO_1000045521" description="UPF0735 ACT domain-containing protein SAB1512c">
    <location>
        <begin position="1"/>
        <end position="152"/>
    </location>
</feature>
<feature type="domain" description="ACT" evidence="1">
    <location>
        <begin position="75"/>
        <end position="150"/>
    </location>
</feature>
<dbReference type="EMBL" id="AJ938182">
    <property type="protein sequence ID" value="CAI81201.1"/>
    <property type="molecule type" value="Genomic_DNA"/>
</dbReference>
<dbReference type="KEGG" id="sab:SAB1512c"/>
<dbReference type="HOGENOM" id="CLU_128147_0_0_9"/>
<dbReference type="Gene3D" id="3.30.70.260">
    <property type="match status" value="1"/>
</dbReference>
<dbReference type="HAMAP" id="MF_00707">
    <property type="entry name" value="UPF0735"/>
    <property type="match status" value="1"/>
</dbReference>
<dbReference type="InterPro" id="IPR045865">
    <property type="entry name" value="ACT-like_dom_sf"/>
</dbReference>
<dbReference type="InterPro" id="IPR002912">
    <property type="entry name" value="ACT_dom"/>
</dbReference>
<dbReference type="InterPro" id="IPR008310">
    <property type="entry name" value="UPF0735_ACT_dom-cont"/>
</dbReference>
<dbReference type="NCBIfam" id="NF003361">
    <property type="entry name" value="PRK04435.1"/>
    <property type="match status" value="1"/>
</dbReference>
<dbReference type="PIRSF" id="PIRSF025624">
    <property type="entry name" value="ACT_PheB"/>
    <property type="match status" value="1"/>
</dbReference>
<dbReference type="SUPFAM" id="SSF55021">
    <property type="entry name" value="ACT-like"/>
    <property type="match status" value="1"/>
</dbReference>
<dbReference type="PROSITE" id="PS51671">
    <property type="entry name" value="ACT"/>
    <property type="match status" value="1"/>
</dbReference>
<comment type="similarity">
    <text evidence="1">Belongs to the UPF0735 family.</text>
</comment>
<name>Y1512_STAAB</name>
<gene>
    <name type="ordered locus">SAB1512c</name>
</gene>
<organism>
    <name type="scientific">Staphylococcus aureus (strain bovine RF122 / ET3-1)</name>
    <dbReference type="NCBI Taxonomy" id="273036"/>
    <lineage>
        <taxon>Bacteria</taxon>
        <taxon>Bacillati</taxon>
        <taxon>Bacillota</taxon>
        <taxon>Bacilli</taxon>
        <taxon>Bacillales</taxon>
        <taxon>Staphylococcaceae</taxon>
        <taxon>Staphylococcus</taxon>
    </lineage>
</organism>
<protein>
    <recommendedName>
        <fullName evidence="1">UPF0735 ACT domain-containing protein SAB1512c</fullName>
    </recommendedName>
</protein>